<dbReference type="EC" id="6.1.1.16" evidence="1"/>
<dbReference type="EMBL" id="CP001598">
    <property type="protein sequence ID" value="ACQ47992.1"/>
    <property type="molecule type" value="Genomic_DNA"/>
</dbReference>
<dbReference type="RefSeq" id="WP_000152268.1">
    <property type="nucleotide sequence ID" value="NC_012659.1"/>
</dbReference>
<dbReference type="SMR" id="C3P9N5"/>
<dbReference type="GeneID" id="45020134"/>
<dbReference type="KEGG" id="bai:BAA_0105"/>
<dbReference type="HOGENOM" id="CLU_013528_0_1_9"/>
<dbReference type="GO" id="GO:0005829">
    <property type="term" value="C:cytosol"/>
    <property type="evidence" value="ECO:0007669"/>
    <property type="project" value="TreeGrafter"/>
</dbReference>
<dbReference type="GO" id="GO:0005524">
    <property type="term" value="F:ATP binding"/>
    <property type="evidence" value="ECO:0007669"/>
    <property type="project" value="UniProtKB-UniRule"/>
</dbReference>
<dbReference type="GO" id="GO:0004817">
    <property type="term" value="F:cysteine-tRNA ligase activity"/>
    <property type="evidence" value="ECO:0007669"/>
    <property type="project" value="UniProtKB-UniRule"/>
</dbReference>
<dbReference type="GO" id="GO:0008270">
    <property type="term" value="F:zinc ion binding"/>
    <property type="evidence" value="ECO:0007669"/>
    <property type="project" value="UniProtKB-UniRule"/>
</dbReference>
<dbReference type="GO" id="GO:0006423">
    <property type="term" value="P:cysteinyl-tRNA aminoacylation"/>
    <property type="evidence" value="ECO:0007669"/>
    <property type="project" value="UniProtKB-UniRule"/>
</dbReference>
<dbReference type="CDD" id="cd00672">
    <property type="entry name" value="CysRS_core"/>
    <property type="match status" value="1"/>
</dbReference>
<dbReference type="FunFam" id="1.20.120.1910:FF:000002">
    <property type="entry name" value="Cysteine--tRNA ligase"/>
    <property type="match status" value="1"/>
</dbReference>
<dbReference type="FunFam" id="3.40.50.620:FF:000009">
    <property type="entry name" value="Cysteine--tRNA ligase"/>
    <property type="match status" value="1"/>
</dbReference>
<dbReference type="Gene3D" id="1.20.120.1910">
    <property type="entry name" value="Cysteine-tRNA ligase, C-terminal anti-codon recognition domain"/>
    <property type="match status" value="1"/>
</dbReference>
<dbReference type="Gene3D" id="3.40.50.620">
    <property type="entry name" value="HUPs"/>
    <property type="match status" value="1"/>
</dbReference>
<dbReference type="HAMAP" id="MF_00041">
    <property type="entry name" value="Cys_tRNA_synth"/>
    <property type="match status" value="1"/>
</dbReference>
<dbReference type="InterPro" id="IPR015803">
    <property type="entry name" value="Cys-tRNA-ligase"/>
</dbReference>
<dbReference type="InterPro" id="IPR015273">
    <property type="entry name" value="Cys-tRNA-synt_Ia_DALR"/>
</dbReference>
<dbReference type="InterPro" id="IPR024909">
    <property type="entry name" value="Cys-tRNA/MSH_ligase"/>
</dbReference>
<dbReference type="InterPro" id="IPR014729">
    <property type="entry name" value="Rossmann-like_a/b/a_fold"/>
</dbReference>
<dbReference type="InterPro" id="IPR032678">
    <property type="entry name" value="tRNA-synt_1_cat_dom"/>
</dbReference>
<dbReference type="InterPro" id="IPR009080">
    <property type="entry name" value="tRNAsynth_Ia_anticodon-bd"/>
</dbReference>
<dbReference type="NCBIfam" id="TIGR00435">
    <property type="entry name" value="cysS"/>
    <property type="match status" value="1"/>
</dbReference>
<dbReference type="PANTHER" id="PTHR10890:SF3">
    <property type="entry name" value="CYSTEINE--TRNA LIGASE, CYTOPLASMIC"/>
    <property type="match status" value="1"/>
</dbReference>
<dbReference type="PANTHER" id="PTHR10890">
    <property type="entry name" value="CYSTEINYL-TRNA SYNTHETASE"/>
    <property type="match status" value="1"/>
</dbReference>
<dbReference type="Pfam" id="PF09190">
    <property type="entry name" value="DALR_2"/>
    <property type="match status" value="1"/>
</dbReference>
<dbReference type="Pfam" id="PF01406">
    <property type="entry name" value="tRNA-synt_1e"/>
    <property type="match status" value="1"/>
</dbReference>
<dbReference type="PRINTS" id="PR00983">
    <property type="entry name" value="TRNASYNTHCYS"/>
</dbReference>
<dbReference type="SMART" id="SM00840">
    <property type="entry name" value="DALR_2"/>
    <property type="match status" value="1"/>
</dbReference>
<dbReference type="SUPFAM" id="SSF47323">
    <property type="entry name" value="Anticodon-binding domain of a subclass of class I aminoacyl-tRNA synthetases"/>
    <property type="match status" value="1"/>
</dbReference>
<dbReference type="SUPFAM" id="SSF52374">
    <property type="entry name" value="Nucleotidylyl transferase"/>
    <property type="match status" value="1"/>
</dbReference>
<protein>
    <recommendedName>
        <fullName evidence="1">Cysteine--tRNA ligase</fullName>
        <ecNumber evidence="1">6.1.1.16</ecNumber>
    </recommendedName>
    <alternativeName>
        <fullName evidence="1">Cysteinyl-tRNA synthetase</fullName>
        <shortName evidence="1">CysRS</shortName>
    </alternativeName>
</protein>
<sequence>MTIHIYNTLTRQKEEFTPLEENKVKMYVCGPTVYNYIHIGNARPPMVFDTVRRYLEYKGYDVQYVSNFTDVDDKLIKAANELGEDVPTIADRFVEAYFEDVTALGCKHATVHPRVTENMDIIIEFIQELVNKGYAYESEGDVYFRTKEFEGYGKLSHQPIADLRHGARIEVGEKKQDPLDFALWKAAKEGEIFWESPWGQGRPGWHIECSAMARKYLGDTIDIHAGGQDLAFPHHENEIAQSEALTGKTFARYWMHNGYININNEKMSKSLGNFILVHDIIKQYDPQLIRFFMLSVHYRHPINFSEELLQSTNNGLERIKTAYGNLKHRMESSTDLTDHNEKWLADLEKFQTAFEEAMNDDFNTANAITELYNVANHANQYLLEEHTSTVVIEAYVKQLETLFDILGLELAQEELLDEEIEALIQKRIEARKNRDFALSDQIRDDLKDRNIILEDTAQGTRWKRG</sequence>
<evidence type="ECO:0000255" key="1">
    <source>
        <dbReference type="HAMAP-Rule" id="MF_00041"/>
    </source>
</evidence>
<proteinExistence type="inferred from homology"/>
<reference key="1">
    <citation type="submission" date="2009-04" db="EMBL/GenBank/DDBJ databases">
        <title>Genome sequence of Bacillus anthracis A0248.</title>
        <authorList>
            <person name="Dodson R.J."/>
            <person name="Munk A.C."/>
            <person name="Bruce D."/>
            <person name="Detter C."/>
            <person name="Tapia R."/>
            <person name="Sutton G."/>
            <person name="Sims D."/>
            <person name="Brettin T."/>
        </authorList>
    </citation>
    <scope>NUCLEOTIDE SEQUENCE [LARGE SCALE GENOMIC DNA]</scope>
    <source>
        <strain>A0248</strain>
    </source>
</reference>
<gene>
    <name evidence="1" type="primary">cysS</name>
    <name type="ordered locus">BAA_0105</name>
</gene>
<name>SYC_BACAA</name>
<accession>C3P9N5</accession>
<feature type="chain" id="PRO_1000199034" description="Cysteine--tRNA ligase">
    <location>
        <begin position="1"/>
        <end position="465"/>
    </location>
</feature>
<feature type="short sequence motif" description="'HIGH' region">
    <location>
        <begin position="31"/>
        <end position="41"/>
    </location>
</feature>
<feature type="short sequence motif" description="'KMSKS' region">
    <location>
        <begin position="266"/>
        <end position="270"/>
    </location>
</feature>
<feature type="binding site" evidence="1">
    <location>
        <position position="29"/>
    </location>
    <ligand>
        <name>Zn(2+)</name>
        <dbReference type="ChEBI" id="CHEBI:29105"/>
    </ligand>
</feature>
<feature type="binding site" evidence="1">
    <location>
        <position position="209"/>
    </location>
    <ligand>
        <name>Zn(2+)</name>
        <dbReference type="ChEBI" id="CHEBI:29105"/>
    </ligand>
</feature>
<feature type="binding site" evidence="1">
    <location>
        <position position="234"/>
    </location>
    <ligand>
        <name>Zn(2+)</name>
        <dbReference type="ChEBI" id="CHEBI:29105"/>
    </ligand>
</feature>
<feature type="binding site" evidence="1">
    <location>
        <position position="238"/>
    </location>
    <ligand>
        <name>Zn(2+)</name>
        <dbReference type="ChEBI" id="CHEBI:29105"/>
    </ligand>
</feature>
<feature type="binding site" evidence="1">
    <location>
        <position position="269"/>
    </location>
    <ligand>
        <name>ATP</name>
        <dbReference type="ChEBI" id="CHEBI:30616"/>
    </ligand>
</feature>
<feature type="modified residue" description="Phosphoserine" evidence="1">
    <location>
        <position position="270"/>
    </location>
</feature>
<organism>
    <name type="scientific">Bacillus anthracis (strain A0248)</name>
    <dbReference type="NCBI Taxonomy" id="592021"/>
    <lineage>
        <taxon>Bacteria</taxon>
        <taxon>Bacillati</taxon>
        <taxon>Bacillota</taxon>
        <taxon>Bacilli</taxon>
        <taxon>Bacillales</taxon>
        <taxon>Bacillaceae</taxon>
        <taxon>Bacillus</taxon>
        <taxon>Bacillus cereus group</taxon>
    </lineage>
</organism>
<comment type="catalytic activity">
    <reaction evidence="1">
        <text>tRNA(Cys) + L-cysteine + ATP = L-cysteinyl-tRNA(Cys) + AMP + diphosphate</text>
        <dbReference type="Rhea" id="RHEA:17773"/>
        <dbReference type="Rhea" id="RHEA-COMP:9661"/>
        <dbReference type="Rhea" id="RHEA-COMP:9679"/>
        <dbReference type="ChEBI" id="CHEBI:30616"/>
        <dbReference type="ChEBI" id="CHEBI:33019"/>
        <dbReference type="ChEBI" id="CHEBI:35235"/>
        <dbReference type="ChEBI" id="CHEBI:78442"/>
        <dbReference type="ChEBI" id="CHEBI:78517"/>
        <dbReference type="ChEBI" id="CHEBI:456215"/>
        <dbReference type="EC" id="6.1.1.16"/>
    </reaction>
</comment>
<comment type="cofactor">
    <cofactor evidence="1">
        <name>Zn(2+)</name>
        <dbReference type="ChEBI" id="CHEBI:29105"/>
    </cofactor>
    <text evidence="1">Binds 1 zinc ion per subunit.</text>
</comment>
<comment type="subunit">
    <text evidence="1">Monomer.</text>
</comment>
<comment type="subcellular location">
    <subcellularLocation>
        <location evidence="1">Cytoplasm</location>
    </subcellularLocation>
</comment>
<comment type="similarity">
    <text evidence="1">Belongs to the class-I aminoacyl-tRNA synthetase family.</text>
</comment>
<keyword id="KW-0030">Aminoacyl-tRNA synthetase</keyword>
<keyword id="KW-0067">ATP-binding</keyword>
<keyword id="KW-0963">Cytoplasm</keyword>
<keyword id="KW-0436">Ligase</keyword>
<keyword id="KW-0479">Metal-binding</keyword>
<keyword id="KW-0547">Nucleotide-binding</keyword>
<keyword id="KW-0597">Phosphoprotein</keyword>
<keyword id="KW-0648">Protein biosynthesis</keyword>
<keyword id="KW-0862">Zinc</keyword>